<organism>
    <name type="scientific">Cereibacter sphaeroides (strain ATCC 17023 / DSM 158 / JCM 6121 / CCUG 31486 / LMG 2827 / NBRC 12203 / NCIMB 8253 / ATH 2.4.1.)</name>
    <name type="common">Rhodobacter sphaeroides</name>
    <dbReference type="NCBI Taxonomy" id="272943"/>
    <lineage>
        <taxon>Bacteria</taxon>
        <taxon>Pseudomonadati</taxon>
        <taxon>Pseudomonadota</taxon>
        <taxon>Alphaproteobacteria</taxon>
        <taxon>Rhodobacterales</taxon>
        <taxon>Paracoccaceae</taxon>
        <taxon>Cereibacter</taxon>
    </lineage>
</organism>
<proteinExistence type="inferred from homology"/>
<evidence type="ECO:0000255" key="1">
    <source>
        <dbReference type="HAMAP-Rule" id="MF_00366"/>
    </source>
</evidence>
<comment type="function">
    <text evidence="1">Promotes RNA polymerase assembly. Latches the N- and C-terminal regions of the beta' subunit thereby facilitating its interaction with the beta and alpha subunits.</text>
</comment>
<comment type="catalytic activity">
    <reaction evidence="1">
        <text>RNA(n) + a ribonucleoside 5'-triphosphate = RNA(n+1) + diphosphate</text>
        <dbReference type="Rhea" id="RHEA:21248"/>
        <dbReference type="Rhea" id="RHEA-COMP:14527"/>
        <dbReference type="Rhea" id="RHEA-COMP:17342"/>
        <dbReference type="ChEBI" id="CHEBI:33019"/>
        <dbReference type="ChEBI" id="CHEBI:61557"/>
        <dbReference type="ChEBI" id="CHEBI:140395"/>
        <dbReference type="EC" id="2.7.7.6"/>
    </reaction>
</comment>
<comment type="subunit">
    <text evidence="1">The RNAP catalytic core consists of 2 alpha, 1 beta, 1 beta' and 1 omega subunit. When a sigma factor is associated with the core the holoenzyme is formed, which can initiate transcription.</text>
</comment>
<comment type="similarity">
    <text evidence="1">Belongs to the RNA polymerase subunit omega family.</text>
</comment>
<feature type="chain" id="PRO_0000237497" description="DNA-directed RNA polymerase subunit omega">
    <location>
        <begin position="1"/>
        <end position="117"/>
    </location>
</feature>
<sequence>MARVTVEDCVDKVPNRFELVMLAAHRAREIASGSSLTIDRDNDKNPVVALREIAEETQSAESLRERMIESHQTQIEVDEPEEDQMALLMGSEVDRPVQDDMSEEKLLRALMEAQGQN</sequence>
<reference key="1">
    <citation type="submission" date="2005-09" db="EMBL/GenBank/DDBJ databases">
        <title>Complete sequence of chromosome 1 of Rhodobacter sphaeroides 2.4.1.</title>
        <authorList>
            <person name="Copeland A."/>
            <person name="Lucas S."/>
            <person name="Lapidus A."/>
            <person name="Barry K."/>
            <person name="Detter J.C."/>
            <person name="Glavina T."/>
            <person name="Hammon N."/>
            <person name="Israni S."/>
            <person name="Pitluck S."/>
            <person name="Richardson P."/>
            <person name="Mackenzie C."/>
            <person name="Choudhary M."/>
            <person name="Larimer F."/>
            <person name="Hauser L.J."/>
            <person name="Land M."/>
            <person name="Donohue T.J."/>
            <person name="Kaplan S."/>
        </authorList>
    </citation>
    <scope>NUCLEOTIDE SEQUENCE [LARGE SCALE GENOMIC DNA]</scope>
    <source>
        <strain>ATCC 17023 / DSM 158 / JCM 6121 / CCUG 31486 / LMG 2827 / NBRC 12203 / NCIMB 8253 / ATH 2.4.1.</strain>
    </source>
</reference>
<keyword id="KW-0240">DNA-directed RNA polymerase</keyword>
<keyword id="KW-0548">Nucleotidyltransferase</keyword>
<keyword id="KW-1185">Reference proteome</keyword>
<keyword id="KW-0804">Transcription</keyword>
<keyword id="KW-0808">Transferase</keyword>
<gene>
    <name evidence="1" type="primary">rpoZ</name>
    <name type="ordered locus">RHOS4_02490</name>
    <name type="ORF">RSP_1669</name>
</gene>
<protein>
    <recommendedName>
        <fullName evidence="1">DNA-directed RNA polymerase subunit omega</fullName>
        <shortName evidence="1">RNAP omega subunit</shortName>
        <ecNumber evidence="1">2.7.7.6</ecNumber>
    </recommendedName>
    <alternativeName>
        <fullName evidence="1">RNA polymerase omega subunit</fullName>
    </alternativeName>
    <alternativeName>
        <fullName evidence="1">Transcriptase subunit omega</fullName>
    </alternativeName>
</protein>
<dbReference type="EC" id="2.7.7.6" evidence="1"/>
<dbReference type="EMBL" id="CP000143">
    <property type="protein sequence ID" value="ABA77817.1"/>
    <property type="molecule type" value="Genomic_DNA"/>
</dbReference>
<dbReference type="RefSeq" id="WP_002722412.1">
    <property type="nucleotide sequence ID" value="NZ_CP030271.1"/>
</dbReference>
<dbReference type="RefSeq" id="YP_351718.1">
    <property type="nucleotide sequence ID" value="NC_007493.2"/>
</dbReference>
<dbReference type="SMR" id="Q3J5W7"/>
<dbReference type="STRING" id="272943.RSP_1669"/>
<dbReference type="EnsemblBacteria" id="ABA77817">
    <property type="protein sequence ID" value="ABA77817"/>
    <property type="gene ID" value="RSP_1669"/>
</dbReference>
<dbReference type="GeneID" id="67448429"/>
<dbReference type="KEGG" id="rsp:RSP_1669"/>
<dbReference type="PATRIC" id="fig|272943.9.peg.546"/>
<dbReference type="eggNOG" id="COG1758">
    <property type="taxonomic scope" value="Bacteria"/>
</dbReference>
<dbReference type="OrthoDB" id="9796300at2"/>
<dbReference type="PhylomeDB" id="Q3J5W7"/>
<dbReference type="Proteomes" id="UP000002703">
    <property type="component" value="Chromosome 1"/>
</dbReference>
<dbReference type="GO" id="GO:0000428">
    <property type="term" value="C:DNA-directed RNA polymerase complex"/>
    <property type="evidence" value="ECO:0007669"/>
    <property type="project" value="UniProtKB-KW"/>
</dbReference>
<dbReference type="GO" id="GO:0003677">
    <property type="term" value="F:DNA binding"/>
    <property type="evidence" value="ECO:0007669"/>
    <property type="project" value="UniProtKB-UniRule"/>
</dbReference>
<dbReference type="GO" id="GO:0003899">
    <property type="term" value="F:DNA-directed RNA polymerase activity"/>
    <property type="evidence" value="ECO:0007669"/>
    <property type="project" value="UniProtKB-UniRule"/>
</dbReference>
<dbReference type="GO" id="GO:0006351">
    <property type="term" value="P:DNA-templated transcription"/>
    <property type="evidence" value="ECO:0007669"/>
    <property type="project" value="UniProtKB-UniRule"/>
</dbReference>
<dbReference type="Gene3D" id="3.90.940.10">
    <property type="match status" value="1"/>
</dbReference>
<dbReference type="HAMAP" id="MF_00366">
    <property type="entry name" value="RNApol_bact_RpoZ"/>
    <property type="match status" value="1"/>
</dbReference>
<dbReference type="InterPro" id="IPR003716">
    <property type="entry name" value="DNA-dir_RNA_pol_omega"/>
</dbReference>
<dbReference type="InterPro" id="IPR006110">
    <property type="entry name" value="Pol_omega/Rpo6/RPB6"/>
</dbReference>
<dbReference type="InterPro" id="IPR036161">
    <property type="entry name" value="RPB6/omega-like_sf"/>
</dbReference>
<dbReference type="NCBIfam" id="TIGR00690">
    <property type="entry name" value="rpoZ"/>
    <property type="match status" value="1"/>
</dbReference>
<dbReference type="PANTHER" id="PTHR34476">
    <property type="entry name" value="DNA-DIRECTED RNA POLYMERASE SUBUNIT OMEGA"/>
    <property type="match status" value="1"/>
</dbReference>
<dbReference type="PANTHER" id="PTHR34476:SF1">
    <property type="entry name" value="DNA-DIRECTED RNA POLYMERASE SUBUNIT OMEGA"/>
    <property type="match status" value="1"/>
</dbReference>
<dbReference type="Pfam" id="PF01192">
    <property type="entry name" value="RNA_pol_Rpb6"/>
    <property type="match status" value="1"/>
</dbReference>
<dbReference type="SMART" id="SM01409">
    <property type="entry name" value="RNA_pol_Rpb6"/>
    <property type="match status" value="1"/>
</dbReference>
<dbReference type="SUPFAM" id="SSF63562">
    <property type="entry name" value="RPB6/omega subunit-like"/>
    <property type="match status" value="1"/>
</dbReference>
<name>RPOZ_CERS4</name>
<accession>Q3J5W7</accession>